<organism>
    <name type="scientific">Fusobacterium nucleatum subsp. nucleatum (strain ATCC 25586 / DSM 15643 / BCRC 10681 / CIP 101130 / JCM 8532 / KCTC 2640 / LMG 13131 / VPI 4355)</name>
    <dbReference type="NCBI Taxonomy" id="190304"/>
    <lineage>
        <taxon>Bacteria</taxon>
        <taxon>Fusobacteriati</taxon>
        <taxon>Fusobacteriota</taxon>
        <taxon>Fusobacteriia</taxon>
        <taxon>Fusobacteriales</taxon>
        <taxon>Fusobacteriaceae</taxon>
        <taxon>Fusobacterium</taxon>
    </lineage>
</organism>
<accession>Q8RHX8</accession>
<reference key="1">
    <citation type="journal article" date="2002" name="J. Bacteriol.">
        <title>Genome sequence and analysis of the oral bacterium Fusobacterium nucleatum strain ATCC 25586.</title>
        <authorList>
            <person name="Kapatral V."/>
            <person name="Anderson I."/>
            <person name="Ivanova N."/>
            <person name="Reznik G."/>
            <person name="Los T."/>
            <person name="Lykidis A."/>
            <person name="Bhattacharyya A."/>
            <person name="Bartman A."/>
            <person name="Gardner W."/>
            <person name="Grechkin G."/>
            <person name="Zhu L."/>
            <person name="Vasieva O."/>
            <person name="Chu L."/>
            <person name="Kogan Y."/>
            <person name="Chaga O."/>
            <person name="Goltsman E."/>
            <person name="Bernal A."/>
            <person name="Larsen N."/>
            <person name="D'Souza M."/>
            <person name="Walunas T."/>
            <person name="Pusch G."/>
            <person name="Haselkorn R."/>
            <person name="Fonstein M."/>
            <person name="Kyrpides N.C."/>
            <person name="Overbeek R."/>
        </authorList>
    </citation>
    <scope>NUCLEOTIDE SEQUENCE [LARGE SCALE GENOMIC DNA]</scope>
    <source>
        <strain>ATCC 25586 / DSM 15643 / BCRC 10681 / CIP 101130 / JCM 8532 / KCTC 2640 / LMG 13131 / VPI 4355</strain>
    </source>
</reference>
<reference key="2">
    <citation type="journal article" date="1982" name="J. Bacteriol.">
        <title>Pathway of lysine degradation in Fusobacterium nucleatum.</title>
        <authorList>
            <person name="Barker H.A."/>
            <person name="Kahn J.M."/>
            <person name="Hedrick L."/>
        </authorList>
    </citation>
    <scope>FUNCTION</scope>
    <scope>CATALYTIC ACTIVITY</scope>
    <scope>PATHWAY</scope>
    <source>
        <strain evidence="5">ATCC 25586 / DSM 15643 / BCRC 10681 / CIP 101130 / JCM 8532 / KCTC 2640 / LMG 13131 / VPI 4355</strain>
    </source>
</reference>
<reference key="3">
    <citation type="journal article" date="2007" name="J. Biol. Chem.">
        <title>Identification of the last unknown genes in the fermentation pathway of lysine.</title>
        <authorList>
            <person name="Kreimeyer A."/>
            <person name="Perret A."/>
            <person name="Lechaplais C."/>
            <person name="Vallenet D."/>
            <person name="Medigue C."/>
            <person name="Salanoubat M."/>
            <person name="Weissenbach J."/>
        </authorList>
    </citation>
    <scope>IDENTIFICATION</scope>
    <source>
        <strain evidence="4">ATCC 25586 / DSM 15643 / BCRC 10681 / CIP 101130 / JCM 8532 / KCTC 2640 / LMG 13131 / VPI 4355</strain>
    </source>
</reference>
<proteinExistence type="evidence at protein level"/>
<protein>
    <recommendedName>
        <fullName evidence="6">Lysine 5,6-aminomutase beta subunit</fullName>
        <shortName evidence="6">5,6-LAM</shortName>
        <ecNumber evidence="1 5">5.4.3.3</ecNumber>
    </recommendedName>
    <alternativeName>
        <fullName evidence="1">D-lysine 5,6-aminomutase beta subunit</fullName>
    </alternativeName>
    <alternativeName>
        <fullName evidence="7">L-beta-lysine 5,6-aminomutase beta subunit</fullName>
    </alternativeName>
</protein>
<comment type="function">
    <text evidence="1 5">Catalyzes the migration of the L-beta-lysine and D-lysine epsilon amino group to the delta carbon to produce 3,5-diaminohexanoate and 2,5-diaminohexanoate, respectively.</text>
</comment>
<comment type="catalytic activity">
    <reaction evidence="5">
        <text>(3S)-3,6-diaminohexanoate = (3S,5S)-3,5-diaminohexanoate</text>
        <dbReference type="Rhea" id="RHEA:21736"/>
        <dbReference type="ChEBI" id="CHEBI:57434"/>
        <dbReference type="ChEBI" id="CHEBI:57436"/>
        <dbReference type="EC" id="5.4.3.3"/>
    </reaction>
</comment>
<comment type="catalytic activity">
    <reaction evidence="1">
        <text>D-lysine = (2R,5S)-2,5-diaminohexanoate</text>
        <dbReference type="Rhea" id="RHEA:18241"/>
        <dbReference type="ChEBI" id="CHEBI:32557"/>
        <dbReference type="ChEBI" id="CHEBI:137487"/>
        <dbReference type="EC" id="5.4.3.3"/>
    </reaction>
</comment>
<comment type="cofactor">
    <cofactor evidence="1">
        <name>adenosylcob(III)alamin</name>
        <dbReference type="ChEBI" id="CHEBI:18408"/>
    </cofactor>
</comment>
<comment type="cofactor">
    <cofactor evidence="1">
        <name>pyridoxal 5'-phosphate</name>
        <dbReference type="ChEBI" id="CHEBI:597326"/>
    </cofactor>
</comment>
<comment type="pathway">
    <text evidence="5">Amino-acid degradation; L-lysine degradation via acetate pathway.</text>
</comment>
<comment type="subunit">
    <text evidence="1">Heterotetramer of 2 alpha and 2 beta subunits.</text>
</comment>
<comment type="similarity">
    <text evidence="2">Belongs to the KamE family.</text>
</comment>
<name>KAME_FUSNN</name>
<keyword id="KW-0846">Cobalamin</keyword>
<keyword id="KW-0170">Cobalt</keyword>
<keyword id="KW-0413">Isomerase</keyword>
<keyword id="KW-0479">Metal-binding</keyword>
<keyword id="KW-0663">Pyridoxal phosphate</keyword>
<keyword id="KW-1185">Reference proteome</keyword>
<gene>
    <name type="ordered locus">FN1862</name>
</gene>
<dbReference type="EC" id="5.4.3.3" evidence="1 5"/>
<dbReference type="EMBL" id="AE009951">
    <property type="protein sequence ID" value="AAL93961.1"/>
    <property type="molecule type" value="Genomic_DNA"/>
</dbReference>
<dbReference type="RefSeq" id="NP_602662.1">
    <property type="nucleotide sequence ID" value="NC_003454.1"/>
</dbReference>
<dbReference type="SMR" id="Q8RHX8"/>
<dbReference type="STRING" id="190304.FN1862"/>
<dbReference type="PaxDb" id="190304-FN1862"/>
<dbReference type="EnsemblBacteria" id="AAL93961">
    <property type="protein sequence ID" value="AAL93961"/>
    <property type="gene ID" value="FN1862"/>
</dbReference>
<dbReference type="KEGG" id="fnu:FN1862"/>
<dbReference type="PATRIC" id="fig|190304.8.peg.338"/>
<dbReference type="eggNOG" id="COG5012">
    <property type="taxonomic scope" value="Bacteria"/>
</dbReference>
<dbReference type="HOGENOM" id="CLU_065773_0_0_0"/>
<dbReference type="InParanoid" id="Q8RHX8"/>
<dbReference type="BioCyc" id="FNUC190304:G1FZS-359-MONOMER"/>
<dbReference type="BioCyc" id="MetaCyc:MONOMER-12293"/>
<dbReference type="BRENDA" id="5.4.3.3">
    <property type="organism ID" value="2370"/>
</dbReference>
<dbReference type="UniPathway" id="UPA00870"/>
<dbReference type="Proteomes" id="UP000002521">
    <property type="component" value="Chromosome"/>
</dbReference>
<dbReference type="GO" id="GO:0031419">
    <property type="term" value="F:cobalamin binding"/>
    <property type="evidence" value="ECO:0007669"/>
    <property type="project" value="UniProtKB-KW"/>
</dbReference>
<dbReference type="GO" id="GO:0047826">
    <property type="term" value="F:D-lysine 5,6-aminomutase activity"/>
    <property type="evidence" value="ECO:0007669"/>
    <property type="project" value="UniProtKB-EC"/>
</dbReference>
<dbReference type="GO" id="GO:0046872">
    <property type="term" value="F:metal ion binding"/>
    <property type="evidence" value="ECO:0007669"/>
    <property type="project" value="UniProtKB-KW"/>
</dbReference>
<dbReference type="GO" id="GO:0046983">
    <property type="term" value="F:protein dimerization activity"/>
    <property type="evidence" value="ECO:0007669"/>
    <property type="project" value="InterPro"/>
</dbReference>
<dbReference type="GO" id="GO:0019475">
    <property type="term" value="P:L-lysine catabolic process to acetate"/>
    <property type="evidence" value="ECO:0007669"/>
    <property type="project" value="UniProtKB-UniPathway"/>
</dbReference>
<dbReference type="CDD" id="cd02067">
    <property type="entry name" value="B12-binding"/>
    <property type="match status" value="1"/>
</dbReference>
<dbReference type="Gene3D" id="3.40.50.280">
    <property type="entry name" value="Cobalamin-binding domain"/>
    <property type="match status" value="1"/>
</dbReference>
<dbReference type="Gene3D" id="3.30.30.60">
    <property type="entry name" value="D-lysine 5,6-aminomutase beta subunit KamE, N-terminal domain"/>
    <property type="match status" value="1"/>
</dbReference>
<dbReference type="InterPro" id="IPR006158">
    <property type="entry name" value="Cobalamin-bd"/>
</dbReference>
<dbReference type="InterPro" id="IPR036724">
    <property type="entry name" value="Cobalamin-bd_sf"/>
</dbReference>
<dbReference type="InterPro" id="IPR028991">
    <property type="entry name" value="KamE_N"/>
</dbReference>
<dbReference type="InterPro" id="IPR036843">
    <property type="entry name" value="KamE_N_sf"/>
</dbReference>
<dbReference type="Pfam" id="PF02310">
    <property type="entry name" value="B12-binding"/>
    <property type="match status" value="1"/>
</dbReference>
<dbReference type="Pfam" id="PF16554">
    <property type="entry name" value="OAM_dimer"/>
    <property type="match status" value="1"/>
</dbReference>
<dbReference type="SUPFAM" id="SSF52242">
    <property type="entry name" value="Cobalamin (vitamin B12)-binding domain"/>
    <property type="match status" value="1"/>
</dbReference>
<dbReference type="SUPFAM" id="SSF117778">
    <property type="entry name" value="D-lysine 5,6-aminomutase beta subunit KamE, N-terminal domain"/>
    <property type="match status" value="1"/>
</dbReference>
<dbReference type="PROSITE" id="PS51332">
    <property type="entry name" value="B12_BINDING"/>
    <property type="match status" value="1"/>
</dbReference>
<evidence type="ECO:0000250" key="1">
    <source>
        <dbReference type="UniProtKB" id="E3PRJ4"/>
    </source>
</evidence>
<evidence type="ECO:0000255" key="2"/>
<evidence type="ECO:0000255" key="3">
    <source>
        <dbReference type="PROSITE-ProRule" id="PRU00666"/>
    </source>
</evidence>
<evidence type="ECO:0000269" key="4">
    <source>
    </source>
</evidence>
<evidence type="ECO:0000269" key="5">
    <source>
    </source>
</evidence>
<evidence type="ECO:0000305" key="6"/>
<evidence type="ECO:0000312" key="7">
    <source>
        <dbReference type="EMBL" id="AAL93961.1"/>
    </source>
</evidence>
<feature type="chain" id="PRO_0000416985" description="Lysine 5,6-aminomutase beta subunit">
    <location>
        <begin position="1"/>
        <end position="263"/>
    </location>
</feature>
<feature type="domain" description="B12-binding" evidence="3">
    <location>
        <begin position="120"/>
        <end position="259"/>
    </location>
</feature>
<feature type="binding site" evidence="1">
    <location>
        <begin position="130"/>
        <end position="136"/>
    </location>
    <ligand>
        <name>adenosylcob(III)alamin</name>
        <dbReference type="ChEBI" id="CHEBI:18408"/>
    </ligand>
</feature>
<feature type="binding site" description="axial binding residue" evidence="1">
    <location>
        <position position="133"/>
    </location>
    <ligand>
        <name>adenosylcob(III)alamin</name>
        <dbReference type="ChEBI" id="CHEBI:18408"/>
    </ligand>
    <ligandPart>
        <name>Co</name>
        <dbReference type="ChEBI" id="CHEBI:27638"/>
    </ligandPart>
</feature>
<feature type="binding site" evidence="1">
    <location>
        <begin position="185"/>
        <end position="192"/>
    </location>
    <ligand>
        <name>adenosylcob(III)alamin</name>
        <dbReference type="ChEBI" id="CHEBI:18408"/>
    </ligand>
</feature>
<feature type="binding site" evidence="1">
    <location>
        <begin position="219"/>
        <end position="223"/>
    </location>
    <ligand>
        <name>adenosylcob(III)alamin</name>
        <dbReference type="ChEBI" id="CHEBI:18408"/>
    </ligand>
</feature>
<feature type="binding site" evidence="1">
    <location>
        <begin position="239"/>
        <end position="244"/>
    </location>
    <ligand>
        <name>adenosylcob(III)alamin</name>
        <dbReference type="ChEBI" id="CHEBI:18408"/>
    </ligand>
</feature>
<feature type="modified residue" description="N6-(pyridoxal phosphate)lysine" evidence="1">
    <location>
        <position position="144"/>
    </location>
</feature>
<sequence>MSSGLYSTEKRDFDTTLDLTQIRPYGDTMNDGKVQMSFTLPVACNEKGIEAALQLARKMGFVNPAVAFSEALDKEFSFYVVYGATSFSVDYTAIKVQALEIDTMDMHECEKYIEENFGREVVMVGASTGTDAHTVGIDAIMNMKGYAGHYGLERYKGVRAYNLGSQVPNEEFIKKAIELKADALLVSQTVTQKDVHIENLTNLVELLEAEGLRDKIILIAGGARITNDLAKELGYDAGFGPGKYADDVATFILKEMVQRGMNK</sequence>